<comment type="function">
    <text>This is a copper-containing oxidase that functions in the formation of pigments such as melanins and other polyphenolic compounds.</text>
</comment>
<comment type="catalytic activity">
    <reaction evidence="2">
        <text>2 L-dopa + O2 = 2 L-dopaquinone + 2 H2O</text>
        <dbReference type="Rhea" id="RHEA:34287"/>
        <dbReference type="ChEBI" id="CHEBI:15377"/>
        <dbReference type="ChEBI" id="CHEBI:15379"/>
        <dbReference type="ChEBI" id="CHEBI:57504"/>
        <dbReference type="ChEBI" id="CHEBI:57924"/>
        <dbReference type="EC" id="1.14.18.1"/>
    </reaction>
</comment>
<comment type="catalytic activity">
    <reaction evidence="2">
        <text>L-tyrosine + O2 = L-dopaquinone + H2O</text>
        <dbReference type="Rhea" id="RHEA:18117"/>
        <dbReference type="ChEBI" id="CHEBI:15377"/>
        <dbReference type="ChEBI" id="CHEBI:15379"/>
        <dbReference type="ChEBI" id="CHEBI:57924"/>
        <dbReference type="ChEBI" id="CHEBI:58315"/>
        <dbReference type="EC" id="1.14.18.1"/>
    </reaction>
</comment>
<comment type="cofactor">
    <cofactor evidence="1">
        <name>Cu(2+)</name>
        <dbReference type="ChEBI" id="CHEBI:29036"/>
    </cofactor>
    <text evidence="1">Binds 2 copper ions per subunit.</text>
</comment>
<comment type="activity regulation">
    <text>Activated by acidifying treatment at pH 3.0.</text>
</comment>
<comment type="subunit">
    <text>Homotetramer.</text>
</comment>
<comment type="PTM">
    <text>The N-terminus is blocked.</text>
</comment>
<comment type="similarity">
    <text evidence="3">Belongs to the tyrosinase family.</text>
</comment>
<gene>
    <name type="primary">melO</name>
    <name type="ORF">AO090038000061</name>
</gene>
<proteinExistence type="evidence at protein level"/>
<keyword id="KW-0186">Copper</keyword>
<keyword id="KW-0903">Direct protein sequencing</keyword>
<keyword id="KW-0470">Melanin biosynthesis</keyword>
<keyword id="KW-0479">Metal-binding</keyword>
<keyword id="KW-0503">Monooxygenase</keyword>
<keyword id="KW-0560">Oxidoreductase</keyword>
<keyword id="KW-1185">Reference proteome</keyword>
<keyword id="KW-0883">Thioether bond</keyword>
<sequence length="539" mass="60605">MASVEPIKTFEIRQKGPVETKAERKSIRDLNEEELDKLIEAWRWIQDPARTGEDSFFYLAGLHGEPFRGAGYNNSHWWGGYCHHGNILFPTWHRAYLMAVEKALRKACPDVSLPYWDESDDETAKKGIPLIFTQKEYKGKPNPLYSYTFSERIVDRLAKFPDADYSKPQGYKTCRYPYSGLCGQDDIAIAQQHNNFLDANFNQEQITGLLNSNVTSWLNLGQFTDIEGKQVKADTRWKIRQCLLTEEYTVFSNTTSAQRWNDEQFHPLESGGKETEAKATSLAVPLESPHNDMHLAIGGVQIPGFNVDQYAGANGDMGENDTASFDPIFYFHHCFIDYLFWTWQTMHKKTDASQITILPEYPGTNSVDSQGPTPGISGNTWLTLDTPLDPFRENGDKVTSNKLLTLKDLPYTYKAPTSGTGSVFNDVPRLNYPLSPPILRVSGINRASIAGSFALAISQTDHTGKAQVKGIESVLSRWHVQGCANCQTHLSTTAFVPLFELNEDDAKRKHANNELAVHLHTRGNPGGQRVRNVTVGTMR</sequence>
<protein>
    <recommendedName>
        <fullName>Tyrosinase</fullName>
        <ecNumber evidence="2">1.14.18.1</ecNumber>
    </recommendedName>
    <alternativeName>
        <fullName>Monophenol monooxygenase</fullName>
    </alternativeName>
</protein>
<organism>
    <name type="scientific">Aspergillus oryzae (strain ATCC 42149 / RIB 40)</name>
    <name type="common">Yellow koji mold</name>
    <dbReference type="NCBI Taxonomy" id="510516"/>
    <lineage>
        <taxon>Eukaryota</taxon>
        <taxon>Fungi</taxon>
        <taxon>Dikarya</taxon>
        <taxon>Ascomycota</taxon>
        <taxon>Pezizomycotina</taxon>
        <taxon>Eurotiomycetes</taxon>
        <taxon>Eurotiomycetidae</taxon>
        <taxon>Eurotiales</taxon>
        <taxon>Aspergillaceae</taxon>
        <taxon>Aspergillus</taxon>
        <taxon>Aspergillus subgen. Circumdati</taxon>
    </lineage>
</organism>
<feature type="chain" id="PRO_0000186733" description="Tyrosinase">
    <location>
        <begin position="1"/>
        <end position="539"/>
    </location>
</feature>
<feature type="binding site" evidence="1">
    <location>
        <position position="63"/>
    </location>
    <ligand>
        <name>Cu cation</name>
        <dbReference type="ChEBI" id="CHEBI:23378"/>
        <label>A</label>
    </ligand>
</feature>
<feature type="binding site" evidence="1">
    <location>
        <position position="84"/>
    </location>
    <ligand>
        <name>Cu cation</name>
        <dbReference type="ChEBI" id="CHEBI:23378"/>
        <label>A</label>
    </ligand>
</feature>
<feature type="binding site" evidence="1">
    <location>
        <position position="93"/>
    </location>
    <ligand>
        <name>Cu cation</name>
        <dbReference type="ChEBI" id="CHEBI:23378"/>
        <label>A</label>
    </ligand>
</feature>
<feature type="binding site" evidence="1">
    <location>
        <position position="290"/>
    </location>
    <ligand>
        <name>Cu cation</name>
        <dbReference type="ChEBI" id="CHEBI:23378"/>
        <label>B</label>
    </ligand>
</feature>
<feature type="binding site" evidence="1">
    <location>
        <position position="294"/>
    </location>
    <ligand>
        <name>Cu cation</name>
        <dbReference type="ChEBI" id="CHEBI:23378"/>
        <label>B</label>
    </ligand>
</feature>
<feature type="binding site" evidence="1">
    <location>
        <position position="333"/>
    </location>
    <ligand>
        <name>Cu cation</name>
        <dbReference type="ChEBI" id="CHEBI:23378"/>
        <label>B</label>
    </ligand>
</feature>
<feature type="cross-link" description="2'-(S-cysteinyl)-histidine (Cys-His)" evidence="1">
    <location>
        <begin position="82"/>
        <end position="84"/>
    </location>
</feature>
<dbReference type="EC" id="1.14.18.1" evidence="2"/>
<dbReference type="EMBL" id="D37929">
    <property type="protein sequence ID" value="BAA07149.1"/>
    <property type="molecule type" value="Genomic_DNA"/>
</dbReference>
<dbReference type="EMBL" id="BA000054">
    <property type="protein sequence ID" value="BAE63910.1"/>
    <property type="molecule type" value="Genomic_DNA"/>
</dbReference>
<dbReference type="PIR" id="S53529">
    <property type="entry name" value="S53529"/>
</dbReference>
<dbReference type="RefSeq" id="XP_001825043.1">
    <property type="nucleotide sequence ID" value="XM_001824991.2"/>
</dbReference>
<dbReference type="SMR" id="Q00234"/>
<dbReference type="STRING" id="510516.Q00234"/>
<dbReference type="EnsemblFungi" id="BAE63910">
    <property type="protein sequence ID" value="BAE63910"/>
    <property type="gene ID" value="AO090038000061"/>
</dbReference>
<dbReference type="GeneID" id="5997138"/>
<dbReference type="KEGG" id="aor:AO090038000061"/>
<dbReference type="VEuPathDB" id="FungiDB:AO090038000061"/>
<dbReference type="HOGENOM" id="CLU_026096_0_0_1"/>
<dbReference type="OMA" id="ANCQTHL"/>
<dbReference type="OrthoDB" id="51542at5052"/>
<dbReference type="Proteomes" id="UP000006564">
    <property type="component" value="Chromosome 6"/>
</dbReference>
<dbReference type="GO" id="GO:0046872">
    <property type="term" value="F:metal ion binding"/>
    <property type="evidence" value="ECO:0007669"/>
    <property type="project" value="UniProtKB-KW"/>
</dbReference>
<dbReference type="GO" id="GO:0004503">
    <property type="term" value="F:tyrosinase activity"/>
    <property type="evidence" value="ECO:0000314"/>
    <property type="project" value="AspGD"/>
</dbReference>
<dbReference type="GO" id="GO:0042438">
    <property type="term" value="P:melanin biosynthetic process"/>
    <property type="evidence" value="ECO:0007669"/>
    <property type="project" value="UniProtKB-KW"/>
</dbReference>
<dbReference type="FunFam" id="1.10.1280.10:FF:000011">
    <property type="entry name" value="Tyrosinase"/>
    <property type="match status" value="1"/>
</dbReference>
<dbReference type="Gene3D" id="1.10.1280.10">
    <property type="entry name" value="Di-copper center containing domain from catechol oxidase"/>
    <property type="match status" value="1"/>
</dbReference>
<dbReference type="InterPro" id="IPR008922">
    <property type="entry name" value="Di-copper_centre_dom_sf"/>
</dbReference>
<dbReference type="InterPro" id="IPR016216">
    <property type="entry name" value="Monophenol_mOase_fun"/>
</dbReference>
<dbReference type="InterPro" id="IPR050316">
    <property type="entry name" value="Tyrosinase/Hemocyanin"/>
</dbReference>
<dbReference type="InterPro" id="IPR002227">
    <property type="entry name" value="Tyrosinase_Cu-bd"/>
</dbReference>
<dbReference type="PANTHER" id="PTHR11474:SF76">
    <property type="entry name" value="SHKT DOMAIN-CONTAINING PROTEIN"/>
    <property type="match status" value="1"/>
</dbReference>
<dbReference type="PANTHER" id="PTHR11474">
    <property type="entry name" value="TYROSINASE FAMILY MEMBER"/>
    <property type="match status" value="1"/>
</dbReference>
<dbReference type="Pfam" id="PF00264">
    <property type="entry name" value="Tyrosinase"/>
    <property type="match status" value="1"/>
</dbReference>
<dbReference type="PIRSF" id="PIRSF000340">
    <property type="entry name" value="MPO_fungal"/>
    <property type="match status" value="1"/>
</dbReference>
<dbReference type="PRINTS" id="PR00092">
    <property type="entry name" value="TYROSINASE"/>
</dbReference>
<dbReference type="SUPFAM" id="SSF48056">
    <property type="entry name" value="Di-copper centre-containing domain"/>
    <property type="match status" value="1"/>
</dbReference>
<dbReference type="PROSITE" id="PS00497">
    <property type="entry name" value="TYROSINASE_1"/>
    <property type="match status" value="1"/>
</dbReference>
<dbReference type="PROSITE" id="PS00498">
    <property type="entry name" value="TYROSINASE_2"/>
    <property type="match status" value="1"/>
</dbReference>
<name>TYRO_ASPOR</name>
<reference key="1">
    <citation type="journal article" date="1995" name="Biochim. Biophys. Acta">
        <title>Molecular cloning and nucleotide sequence of the protyrosinase gene, melO, from Aspergillus oryzae and expression of the gene in yeast cells.</title>
        <authorList>
            <person name="Fujita Y."/>
            <person name="Uraga Y."/>
            <person name="Ichishima E."/>
        </authorList>
    </citation>
    <scope>NUCLEOTIDE SEQUENCE [GENOMIC DNA]</scope>
    <scope>PARTIAL PROTEIN SEQUENCE</scope>
    <scope>CATALYTIC ACTIVITY</scope>
    <source>
        <strain>ATCC 22788 / RIB 128 / CBS 819.72 / IFO 30113 / JCM 2248</strain>
    </source>
</reference>
<reference key="2">
    <citation type="journal article" date="2005" name="Nature">
        <title>Genome sequencing and analysis of Aspergillus oryzae.</title>
        <authorList>
            <person name="Machida M."/>
            <person name="Asai K."/>
            <person name="Sano M."/>
            <person name="Tanaka T."/>
            <person name="Kumagai T."/>
            <person name="Terai G."/>
            <person name="Kusumoto K."/>
            <person name="Arima T."/>
            <person name="Akita O."/>
            <person name="Kashiwagi Y."/>
            <person name="Abe K."/>
            <person name="Gomi K."/>
            <person name="Horiuchi H."/>
            <person name="Kitamoto K."/>
            <person name="Kobayashi T."/>
            <person name="Takeuchi M."/>
            <person name="Denning D.W."/>
            <person name="Galagan J.E."/>
            <person name="Nierman W.C."/>
            <person name="Yu J."/>
            <person name="Archer D.B."/>
            <person name="Bennett J.W."/>
            <person name="Bhatnagar D."/>
            <person name="Cleveland T.E."/>
            <person name="Fedorova N.D."/>
            <person name="Gotoh O."/>
            <person name="Horikawa H."/>
            <person name="Hosoyama A."/>
            <person name="Ichinomiya M."/>
            <person name="Igarashi R."/>
            <person name="Iwashita K."/>
            <person name="Juvvadi P.R."/>
            <person name="Kato M."/>
            <person name="Kato Y."/>
            <person name="Kin T."/>
            <person name="Kokubun A."/>
            <person name="Maeda H."/>
            <person name="Maeyama N."/>
            <person name="Maruyama J."/>
            <person name="Nagasaki H."/>
            <person name="Nakajima T."/>
            <person name="Oda K."/>
            <person name="Okada K."/>
            <person name="Paulsen I."/>
            <person name="Sakamoto K."/>
            <person name="Sawano T."/>
            <person name="Takahashi M."/>
            <person name="Takase K."/>
            <person name="Terabayashi Y."/>
            <person name="Wortman J.R."/>
            <person name="Yamada O."/>
            <person name="Yamagata Y."/>
            <person name="Anazawa H."/>
            <person name="Hata Y."/>
            <person name="Koide Y."/>
            <person name="Komori T."/>
            <person name="Koyama Y."/>
            <person name="Minetoki T."/>
            <person name="Suharnan S."/>
            <person name="Tanaka A."/>
            <person name="Isono K."/>
            <person name="Kuhara S."/>
            <person name="Ogasawara N."/>
            <person name="Kikuchi H."/>
        </authorList>
    </citation>
    <scope>NUCLEOTIDE SEQUENCE [LARGE SCALE GENOMIC DNA]</scope>
    <source>
        <strain>ATCC 42149 / RIB 40</strain>
    </source>
</reference>
<accession>Q00234</accession>
<accession>Q2U3F5</accession>
<evidence type="ECO:0000250" key="1">
    <source>
        <dbReference type="UniProtKB" id="Q9ZP19"/>
    </source>
</evidence>
<evidence type="ECO:0000269" key="2">
    <source>
    </source>
</evidence>
<evidence type="ECO:0000305" key="3"/>